<reference key="1">
    <citation type="journal article" date="2005" name="J. Bacteriol.">
        <title>The genome of Sulfolobus acidocaldarius, a model organism of the Crenarchaeota.</title>
        <authorList>
            <person name="Chen L."/>
            <person name="Bruegger K."/>
            <person name="Skovgaard M."/>
            <person name="Redder P."/>
            <person name="She Q."/>
            <person name="Torarinsson E."/>
            <person name="Greve B."/>
            <person name="Awayez M."/>
            <person name="Zibat A."/>
            <person name="Klenk H.-P."/>
            <person name="Garrett R.A."/>
        </authorList>
    </citation>
    <scope>NUCLEOTIDE SEQUENCE [LARGE SCALE GENOMIC DNA]</scope>
    <source>
        <strain>ATCC 33909 / DSM 639 / JCM 8929 / NBRC 15157 / NCIMB 11770</strain>
    </source>
</reference>
<comment type="function">
    <text evidence="1">Involved in regulation of DNA replication.</text>
</comment>
<comment type="similarity">
    <text evidence="1">Belongs to the CDC6/cdc18 family.</text>
</comment>
<dbReference type="EMBL" id="CP000077">
    <property type="protein sequence ID" value="AAY80266.1"/>
    <property type="molecule type" value="Genomic_DNA"/>
</dbReference>
<dbReference type="SMR" id="Q4JAB4"/>
<dbReference type="STRING" id="330779.Saci_0903"/>
<dbReference type="KEGG" id="sai:Saci_0903"/>
<dbReference type="PATRIC" id="fig|330779.12.peg.863"/>
<dbReference type="eggNOG" id="arCOG00467">
    <property type="taxonomic scope" value="Archaea"/>
</dbReference>
<dbReference type="HOGENOM" id="CLU_025112_3_2_2"/>
<dbReference type="Proteomes" id="UP000001018">
    <property type="component" value="Chromosome"/>
</dbReference>
<dbReference type="GO" id="GO:0005524">
    <property type="term" value="F:ATP binding"/>
    <property type="evidence" value="ECO:0007669"/>
    <property type="project" value="UniProtKB-UniRule"/>
</dbReference>
<dbReference type="GO" id="GO:0016887">
    <property type="term" value="F:ATP hydrolysis activity"/>
    <property type="evidence" value="ECO:0007669"/>
    <property type="project" value="InterPro"/>
</dbReference>
<dbReference type="GO" id="GO:0006260">
    <property type="term" value="P:DNA replication"/>
    <property type="evidence" value="ECO:0007669"/>
    <property type="project" value="UniProtKB-UniRule"/>
</dbReference>
<dbReference type="CDD" id="cd08768">
    <property type="entry name" value="Cdc6_C"/>
    <property type="match status" value="1"/>
</dbReference>
<dbReference type="Gene3D" id="1.10.8.60">
    <property type="match status" value="1"/>
</dbReference>
<dbReference type="Gene3D" id="3.40.50.300">
    <property type="entry name" value="P-loop containing nucleotide triphosphate hydrolases"/>
    <property type="match status" value="1"/>
</dbReference>
<dbReference type="Gene3D" id="1.10.10.10">
    <property type="entry name" value="Winged helix-like DNA-binding domain superfamily/Winged helix DNA-binding domain"/>
    <property type="match status" value="1"/>
</dbReference>
<dbReference type="HAMAP" id="MF_01407">
    <property type="entry name" value="ORC1_type_DNA_replic_protein"/>
    <property type="match status" value="1"/>
</dbReference>
<dbReference type="InterPro" id="IPR049945">
    <property type="entry name" value="AAA_22"/>
</dbReference>
<dbReference type="InterPro" id="IPR015163">
    <property type="entry name" value="Cdc6_C"/>
</dbReference>
<dbReference type="InterPro" id="IPR055237">
    <property type="entry name" value="Cdc6_lid"/>
</dbReference>
<dbReference type="InterPro" id="IPR050311">
    <property type="entry name" value="ORC1/CDC6"/>
</dbReference>
<dbReference type="InterPro" id="IPR014277">
    <property type="entry name" value="Orc1/Cdc6_arc"/>
</dbReference>
<dbReference type="InterPro" id="IPR027417">
    <property type="entry name" value="P-loop_NTPase"/>
</dbReference>
<dbReference type="InterPro" id="IPR036388">
    <property type="entry name" value="WH-like_DNA-bd_sf"/>
</dbReference>
<dbReference type="InterPro" id="IPR036390">
    <property type="entry name" value="WH_DNA-bd_sf"/>
</dbReference>
<dbReference type="NCBIfam" id="TIGR02928">
    <property type="entry name" value="orc1/cdc6 family replication initiation protein"/>
    <property type="match status" value="1"/>
</dbReference>
<dbReference type="NCBIfam" id="NF001623">
    <property type="entry name" value="PRK00411.1-1"/>
    <property type="match status" value="1"/>
</dbReference>
<dbReference type="PANTHER" id="PTHR10763">
    <property type="entry name" value="CELL DIVISION CONTROL PROTEIN 6-RELATED"/>
    <property type="match status" value="1"/>
</dbReference>
<dbReference type="PANTHER" id="PTHR10763:SF31">
    <property type="entry name" value="ORC1-TYPE DNA REPLICATION PROTEIN 2"/>
    <property type="match status" value="1"/>
</dbReference>
<dbReference type="Pfam" id="PF13401">
    <property type="entry name" value="AAA_22"/>
    <property type="match status" value="1"/>
</dbReference>
<dbReference type="Pfam" id="PF09079">
    <property type="entry name" value="Cdc6_C"/>
    <property type="match status" value="1"/>
</dbReference>
<dbReference type="Pfam" id="PF22703">
    <property type="entry name" value="Cdc6_lid"/>
    <property type="match status" value="1"/>
</dbReference>
<dbReference type="SMART" id="SM01074">
    <property type="entry name" value="Cdc6_C"/>
    <property type="match status" value="1"/>
</dbReference>
<dbReference type="SUPFAM" id="SSF52540">
    <property type="entry name" value="P-loop containing nucleoside triphosphate hydrolases"/>
    <property type="match status" value="1"/>
</dbReference>
<dbReference type="SUPFAM" id="SSF46785">
    <property type="entry name" value="Winged helix' DNA-binding domain"/>
    <property type="match status" value="1"/>
</dbReference>
<keyword id="KW-0067">ATP-binding</keyword>
<keyword id="KW-0235">DNA replication</keyword>
<keyword id="KW-0547">Nucleotide-binding</keyword>
<keyword id="KW-1185">Reference proteome</keyword>
<sequence length="415" mass="47924">MDDIKNLIEDLLGGDTVFNNTKILNPEYIPSNLPHRENQIKEMTVSFRDLILNPGSSSIRLVIIGRTGTGKSVTTKKFGLKLREIAHERNLRLEYVHVNCHRQRTLYLILQEISQGLRLQLPNRGLSSQETFRIIYDYLEKRNIHLVITLDEFDYFVSTAPLEDIYFLVRVYDELNVTTKRLHYIFIVREITSLSGLDKSIKDHIIKNIIDFPPYKSTELYDILADRVYNEKAFKENSVSEDVLRFIAEVHGFDKGGSGNARISIETLELAGKIADSENSPIVTLEHAKKANSKINPELSALIDSIKELDLHQLIFLKALVLLHDQEGIDFFPIGKIEQRYVELSKNFGEEPRRHTQIFEYVRRMKLMGLINTRQSGRGMRGRTTLVSLPIPISMEFKDLINTEIRKRLEQSRIS</sequence>
<protein>
    <recommendedName>
        <fullName evidence="1">ORC1-type DNA replication protein 2</fullName>
    </recommendedName>
</protein>
<evidence type="ECO:0000255" key="1">
    <source>
        <dbReference type="HAMAP-Rule" id="MF_01407"/>
    </source>
</evidence>
<name>CDC62_SULAC</name>
<gene>
    <name type="primary">cdc6-2</name>
    <name type="ordered locus">Saci_0903</name>
</gene>
<organism>
    <name type="scientific">Sulfolobus acidocaldarius (strain ATCC 33909 / DSM 639 / JCM 8929 / NBRC 15157 / NCIMB 11770)</name>
    <dbReference type="NCBI Taxonomy" id="330779"/>
    <lineage>
        <taxon>Archaea</taxon>
        <taxon>Thermoproteota</taxon>
        <taxon>Thermoprotei</taxon>
        <taxon>Sulfolobales</taxon>
        <taxon>Sulfolobaceae</taxon>
        <taxon>Sulfolobus</taxon>
    </lineage>
</organism>
<accession>Q4JAB4</accession>
<proteinExistence type="inferred from homology"/>
<feature type="chain" id="PRO_0000151016" description="ORC1-type DNA replication protein 2">
    <location>
        <begin position="1"/>
        <end position="415"/>
    </location>
</feature>
<feature type="binding site" evidence="1">
    <location>
        <begin position="69"/>
        <end position="73"/>
    </location>
    <ligand>
        <name>ATP</name>
        <dbReference type="ChEBI" id="CHEBI:30616"/>
    </ligand>
</feature>
<feature type="binding site" evidence="1">
    <location>
        <position position="215"/>
    </location>
    <ligand>
        <name>ATP</name>
        <dbReference type="ChEBI" id="CHEBI:30616"/>
    </ligand>
</feature>
<feature type="binding site" evidence="1">
    <location>
        <position position="227"/>
    </location>
    <ligand>
        <name>ATP</name>
        <dbReference type="ChEBI" id="CHEBI:30616"/>
    </ligand>
</feature>